<keyword id="KW-0963">Cytoplasm</keyword>
<gene>
    <name evidence="1" type="primary">rraA</name>
    <name type="ordered locus">NTHI0636</name>
</gene>
<organism>
    <name type="scientific">Haemophilus influenzae (strain 86-028NP)</name>
    <dbReference type="NCBI Taxonomy" id="281310"/>
    <lineage>
        <taxon>Bacteria</taxon>
        <taxon>Pseudomonadati</taxon>
        <taxon>Pseudomonadota</taxon>
        <taxon>Gammaproteobacteria</taxon>
        <taxon>Pasteurellales</taxon>
        <taxon>Pasteurellaceae</taxon>
        <taxon>Haemophilus</taxon>
    </lineage>
</organism>
<proteinExistence type="inferred from homology"/>
<reference key="1">
    <citation type="journal article" date="2005" name="J. Bacteriol.">
        <title>Genomic sequence of an otitis media isolate of nontypeable Haemophilus influenzae: comparative study with H. influenzae serotype d, strain KW20.</title>
        <authorList>
            <person name="Harrison A."/>
            <person name="Dyer D.W."/>
            <person name="Gillaspy A."/>
            <person name="Ray W.C."/>
            <person name="Mungur R."/>
            <person name="Carson M.B."/>
            <person name="Zhong H."/>
            <person name="Gipson J."/>
            <person name="Gipson M."/>
            <person name="Johnson L.S."/>
            <person name="Lewis L."/>
            <person name="Bakaletz L.O."/>
            <person name="Munson R.S. Jr."/>
        </authorList>
    </citation>
    <scope>NUCLEOTIDE SEQUENCE [LARGE SCALE GENOMIC DNA]</scope>
    <source>
        <strain>86-028NP</strain>
    </source>
</reference>
<feature type="chain" id="PRO_1000013840" description="Regulator of ribonuclease activity A">
    <location>
        <begin position="1"/>
        <end position="162"/>
    </location>
</feature>
<name>RRAA_HAEI8</name>
<protein>
    <recommendedName>
        <fullName evidence="1">Regulator of ribonuclease activity A</fullName>
    </recommendedName>
</protein>
<comment type="function">
    <text evidence="1">Globally modulates RNA abundance by binding to RNase E (Rne) and regulating its endonucleolytic activity. Can modulate Rne action in a substrate-dependent manner by altering the composition of the degradosome. Modulates RNA-binding and helicase activities of the degradosome.</text>
</comment>
<comment type="subunit">
    <text evidence="1">Homotrimer. Binds to both RNA-binding sites in the C-terminal region of Rne and to RhlB.</text>
</comment>
<comment type="subcellular location">
    <subcellularLocation>
        <location evidence="1">Cytoplasm</location>
    </subcellularLocation>
</comment>
<comment type="similarity">
    <text evidence="1">Belongs to the RraA family.</text>
</comment>
<accession>Q4QN38</accession>
<sequence>MFIDTSELCDLYAEQVDVVEPIFSSFGGVSHFYGKVTTVKCFESNGLIAEVLEENGEGRVLVIDGGGAVRRGLIDAELAQLAVDNGWEGIIVYGAVRQIQQLENLDIGIHALAPIPVSADESSAGESDIPVNFGGVTFFPEDYIYADLTGIILSQEPLDLED</sequence>
<evidence type="ECO:0000255" key="1">
    <source>
        <dbReference type="HAMAP-Rule" id="MF_00471"/>
    </source>
</evidence>
<dbReference type="EMBL" id="CP000057">
    <property type="protein sequence ID" value="AAX87559.1"/>
    <property type="molecule type" value="Genomic_DNA"/>
</dbReference>
<dbReference type="RefSeq" id="WP_005649446.1">
    <property type="nucleotide sequence ID" value="NC_007146.2"/>
</dbReference>
<dbReference type="SMR" id="Q4QN38"/>
<dbReference type="GeneID" id="93219519"/>
<dbReference type="KEGG" id="hit:NTHI0636"/>
<dbReference type="HOGENOM" id="CLU_072626_4_0_6"/>
<dbReference type="Proteomes" id="UP000002525">
    <property type="component" value="Chromosome"/>
</dbReference>
<dbReference type="GO" id="GO:0005737">
    <property type="term" value="C:cytoplasm"/>
    <property type="evidence" value="ECO:0007669"/>
    <property type="project" value="UniProtKB-SubCell"/>
</dbReference>
<dbReference type="GO" id="GO:0060698">
    <property type="term" value="F:endoribonuclease inhibitor activity"/>
    <property type="evidence" value="ECO:0007669"/>
    <property type="project" value="UniProtKB-UniRule"/>
</dbReference>
<dbReference type="GO" id="GO:0019899">
    <property type="term" value="F:enzyme binding"/>
    <property type="evidence" value="ECO:0007669"/>
    <property type="project" value="UniProtKB-UniRule"/>
</dbReference>
<dbReference type="GO" id="GO:0051252">
    <property type="term" value="P:regulation of RNA metabolic process"/>
    <property type="evidence" value="ECO:0007669"/>
    <property type="project" value="InterPro"/>
</dbReference>
<dbReference type="CDD" id="cd16841">
    <property type="entry name" value="RraA_family"/>
    <property type="match status" value="1"/>
</dbReference>
<dbReference type="Gene3D" id="3.50.30.40">
    <property type="entry name" value="Ribonuclease E inhibitor RraA/RraA-like"/>
    <property type="match status" value="1"/>
</dbReference>
<dbReference type="HAMAP" id="MF_00471">
    <property type="entry name" value="RraA"/>
    <property type="match status" value="1"/>
</dbReference>
<dbReference type="InterPro" id="IPR010203">
    <property type="entry name" value="RraA"/>
</dbReference>
<dbReference type="InterPro" id="IPR005493">
    <property type="entry name" value="RraA/RraA-like"/>
</dbReference>
<dbReference type="InterPro" id="IPR036704">
    <property type="entry name" value="RraA/RraA-like_sf"/>
</dbReference>
<dbReference type="InterPro" id="IPR014339">
    <property type="entry name" value="RraA_gpbac"/>
</dbReference>
<dbReference type="NCBIfam" id="TIGR01935">
    <property type="entry name" value="NOT-MenG"/>
    <property type="match status" value="1"/>
</dbReference>
<dbReference type="NCBIfam" id="NF006875">
    <property type="entry name" value="PRK09372.1"/>
    <property type="match status" value="1"/>
</dbReference>
<dbReference type="NCBIfam" id="TIGR02998">
    <property type="entry name" value="RraA_entero"/>
    <property type="match status" value="1"/>
</dbReference>
<dbReference type="PANTHER" id="PTHR33254">
    <property type="entry name" value="4-HYDROXY-4-METHYL-2-OXOGLUTARATE ALDOLASE 3-RELATED"/>
    <property type="match status" value="1"/>
</dbReference>
<dbReference type="PANTHER" id="PTHR33254:SF29">
    <property type="entry name" value="REGULATOR OF RIBONUCLEASE ACTIVITY A"/>
    <property type="match status" value="1"/>
</dbReference>
<dbReference type="Pfam" id="PF03737">
    <property type="entry name" value="RraA-like"/>
    <property type="match status" value="1"/>
</dbReference>
<dbReference type="SUPFAM" id="SSF89562">
    <property type="entry name" value="RraA-like"/>
    <property type="match status" value="1"/>
</dbReference>